<feature type="chain" id="PRO_0000155118" description="Acetyl-CoA decarbonylase/synthase complex subunit gamma">
    <location>
        <begin position="1"/>
        <end position="470"/>
    </location>
</feature>
<feature type="domain" description="4Fe-4S" evidence="2">
    <location>
        <begin position="1"/>
        <end position="62"/>
    </location>
</feature>
<feature type="binding site" evidence="1">
    <location>
        <position position="18"/>
    </location>
    <ligand>
        <name>[4Fe-4S] cluster</name>
        <dbReference type="ChEBI" id="CHEBI:49883"/>
    </ligand>
</feature>
<feature type="binding site" evidence="1">
    <location>
        <position position="21"/>
    </location>
    <ligand>
        <name>[4Fe-4S] cluster</name>
        <dbReference type="ChEBI" id="CHEBI:49883"/>
    </ligand>
</feature>
<feature type="binding site" evidence="1">
    <location>
        <position position="26"/>
    </location>
    <ligand>
        <name>[4Fe-4S] cluster</name>
        <dbReference type="ChEBI" id="CHEBI:49883"/>
    </ligand>
</feature>
<feature type="binding site" evidence="1">
    <location>
        <position position="43"/>
    </location>
    <ligand>
        <name>[4Fe-4S] cluster</name>
        <dbReference type="ChEBI" id="CHEBI:49883"/>
    </ligand>
</feature>
<evidence type="ECO:0000255" key="1">
    <source>
        <dbReference type="HAMAP-Rule" id="MF_01136"/>
    </source>
</evidence>
<evidence type="ECO:0000255" key="2">
    <source>
        <dbReference type="PROSITE-ProRule" id="PRU00989"/>
    </source>
</evidence>
<reference key="1">
    <citation type="journal article" date="1997" name="Nature">
        <title>The complete genome sequence of the hyperthermophilic, sulphate-reducing archaeon Archaeoglobus fulgidus.</title>
        <authorList>
            <person name="Klenk H.-P."/>
            <person name="Clayton R.A."/>
            <person name="Tomb J.-F."/>
            <person name="White O."/>
            <person name="Nelson K.E."/>
            <person name="Ketchum K.A."/>
            <person name="Dodson R.J."/>
            <person name="Gwinn M.L."/>
            <person name="Hickey E.K."/>
            <person name="Peterson J.D."/>
            <person name="Richardson D.L."/>
            <person name="Kerlavage A.R."/>
            <person name="Graham D.E."/>
            <person name="Kyrpides N.C."/>
            <person name="Fleischmann R.D."/>
            <person name="Quackenbush J."/>
            <person name="Lee N.H."/>
            <person name="Sutton G.G."/>
            <person name="Gill S.R."/>
            <person name="Kirkness E.F."/>
            <person name="Dougherty B.A."/>
            <person name="McKenney K."/>
            <person name="Adams M.D."/>
            <person name="Loftus B.J."/>
            <person name="Peterson S.N."/>
            <person name="Reich C.I."/>
            <person name="McNeil L.K."/>
            <person name="Badger J.H."/>
            <person name="Glodek A."/>
            <person name="Zhou L."/>
            <person name="Overbeek R."/>
            <person name="Gocayne J.D."/>
            <person name="Weidman J.F."/>
            <person name="McDonald L.A."/>
            <person name="Utterback T.R."/>
            <person name="Cotton M.D."/>
            <person name="Spriggs T."/>
            <person name="Artiach P."/>
            <person name="Kaine B.P."/>
            <person name="Sykes S.M."/>
            <person name="Sadow P.W."/>
            <person name="D'Andrea K.P."/>
            <person name="Bowman C."/>
            <person name="Fujii C."/>
            <person name="Garland S.A."/>
            <person name="Mason T.M."/>
            <person name="Olsen G.J."/>
            <person name="Fraser C.M."/>
            <person name="Smith H.O."/>
            <person name="Woese C.R."/>
            <person name="Venter J.C."/>
        </authorList>
    </citation>
    <scope>NUCLEOTIDE SEQUENCE [LARGE SCALE GENOMIC DNA]</scope>
    <source>
        <strain>ATCC 49558 / DSM 4304 / JCM 9628 / NBRC 100126 / VC-16</strain>
    </source>
</reference>
<reference key="2">
    <citation type="journal article" date="1998" name="Arch. Microbiol.">
        <title>Acetyl-CoA decarbonylase/synthase complex from Archaeoglobus fulgidus.</title>
        <authorList>
            <person name="Dai Y.R."/>
            <person name="Reed D.W."/>
            <person name="Millstein J.H."/>
            <person name="Hartzell P.L."/>
            <person name="Grahame D.A."/>
            <person name="DeMoll E."/>
        </authorList>
    </citation>
    <scope>PROTEIN SEQUENCE OF 1-19</scope>
    <source>
        <strain>ATCC 49558 / DSM 4304 / JCM 9628 / NBRC 100126 / VC-16</strain>
    </source>
</reference>
<sequence length="470" mass="52551">MKVKSPLEVYNYLPRTNCGECGFDTCMSFAAHILDRSVTPLDCKPLVRDAEKDPKVKKKLEELLELTAPEIAEVVIGVGENAVKIGGEEVLHRHELTFFNPTGFFYDVWDTMDDKALEERCDRVVSYKKFYVGNFLTLDGFAVRCTSGDPKRYREVVKKVASYGKPLILVALDSECMKAALEEVADQRPLMYAATEGNWKEFLKLALEYKVPVTLRAKDLDLLKSMAVTFKQAGVKDIVLDPVTEPLGEGLKGTFERVIQLRRTAIAGQDKDVAYPIMITPIAAWLIEGDDVTKSYWEAVIASIFIVKYGDVMIFRSIDQHVVMPTITLRFNIYTDPRTPVQVEPGLRAINDPGPDDPVFITTNFALTYYTVESDLTSGGIKGWLLVLNTEGLGVEVSVAGGQFTASKVKELIEETKIEEKVNHRYLVIPGLAARLQGAIEDETGWKVLVGPMDSGRIKGWLEKNWPPKE</sequence>
<dbReference type="EC" id="2.1.1.245" evidence="1"/>
<dbReference type="EMBL" id="AE000782">
    <property type="protein sequence ID" value="AAB90860.1"/>
    <property type="molecule type" value="Genomic_DNA"/>
</dbReference>
<dbReference type="PIR" id="H69296">
    <property type="entry name" value="H69296"/>
</dbReference>
<dbReference type="SMR" id="O29871"/>
<dbReference type="STRING" id="224325.AF_0376"/>
<dbReference type="PaxDb" id="224325-AF_0376"/>
<dbReference type="DNASU" id="1483591"/>
<dbReference type="EnsemblBacteria" id="AAB90860">
    <property type="protein sequence ID" value="AAB90860"/>
    <property type="gene ID" value="AF_0376"/>
</dbReference>
<dbReference type="KEGG" id="afu:AF_0376"/>
<dbReference type="eggNOG" id="arCOG01979">
    <property type="taxonomic scope" value="Archaea"/>
</dbReference>
<dbReference type="HOGENOM" id="CLU_050002_0_0_2"/>
<dbReference type="OrthoDB" id="146240at2157"/>
<dbReference type="PhylomeDB" id="O29871"/>
<dbReference type="BioCyc" id="MetaCyc:AF_RS01920-MONOMER"/>
<dbReference type="BRENDA" id="2.1.1.245">
    <property type="organism ID" value="414"/>
</dbReference>
<dbReference type="Proteomes" id="UP000002199">
    <property type="component" value="Chromosome"/>
</dbReference>
<dbReference type="GO" id="GO:0051539">
    <property type="term" value="F:4 iron, 4 sulfur cluster binding"/>
    <property type="evidence" value="ECO:0007669"/>
    <property type="project" value="UniProtKB-KW"/>
</dbReference>
<dbReference type="GO" id="GO:0005506">
    <property type="term" value="F:iron ion binding"/>
    <property type="evidence" value="ECO:0007669"/>
    <property type="project" value="UniProtKB-UniRule"/>
</dbReference>
<dbReference type="GO" id="GO:0008168">
    <property type="term" value="F:methyltransferase activity"/>
    <property type="evidence" value="ECO:0007669"/>
    <property type="project" value="UniProtKB-UniRule"/>
</dbReference>
<dbReference type="GO" id="GO:0046356">
    <property type="term" value="P:acetyl-CoA catabolic process"/>
    <property type="evidence" value="ECO:0007669"/>
    <property type="project" value="InterPro"/>
</dbReference>
<dbReference type="GO" id="GO:0032259">
    <property type="term" value="P:methylation"/>
    <property type="evidence" value="ECO:0007669"/>
    <property type="project" value="UniProtKB-KW"/>
</dbReference>
<dbReference type="Gene3D" id="3.40.50.11600">
    <property type="match status" value="1"/>
</dbReference>
<dbReference type="Gene3D" id="3.20.20.20">
    <property type="entry name" value="Dihydropteroate synthase-like"/>
    <property type="match status" value="1"/>
</dbReference>
<dbReference type="Gene3D" id="1.10.15.40">
    <property type="entry name" value="Electron transport complex subunit B, putative Fe-S cluster"/>
    <property type="match status" value="1"/>
</dbReference>
<dbReference type="HAMAP" id="MF_01136">
    <property type="entry name" value="CdhE"/>
    <property type="match status" value="1"/>
</dbReference>
<dbReference type="InterPro" id="IPR007202">
    <property type="entry name" value="4Fe-4S_dom"/>
</dbReference>
<dbReference type="InterPro" id="IPR016041">
    <property type="entry name" value="Ac-CoA_synth_d_su_TIM-brl"/>
</dbReference>
<dbReference type="InterPro" id="IPR051069">
    <property type="entry name" value="ACDS_complex_subunit"/>
</dbReference>
<dbReference type="InterPro" id="IPR016218">
    <property type="entry name" value="AcylCoA_decarb/synth_gsu"/>
</dbReference>
<dbReference type="InterPro" id="IPR023427">
    <property type="entry name" value="AcylCoA_decarb/synth_gsu_arc"/>
</dbReference>
<dbReference type="InterPro" id="IPR011005">
    <property type="entry name" value="Dihydropteroate_synth-like_sf"/>
</dbReference>
<dbReference type="NCBIfam" id="NF003195">
    <property type="entry name" value="PRK04165.1"/>
    <property type="match status" value="1"/>
</dbReference>
<dbReference type="PANTHER" id="PTHR36214">
    <property type="match status" value="1"/>
</dbReference>
<dbReference type="PANTHER" id="PTHR36214:SF3">
    <property type="entry name" value="ACETYL-COA DECARBONYLASE_SYNTHASE COMPLEX SUBUNIT GAMMA"/>
    <property type="match status" value="1"/>
</dbReference>
<dbReference type="Pfam" id="PF03599">
    <property type="entry name" value="CdhD"/>
    <property type="match status" value="1"/>
</dbReference>
<dbReference type="Pfam" id="PF04060">
    <property type="entry name" value="FeS"/>
    <property type="match status" value="1"/>
</dbReference>
<dbReference type="PIRSF" id="PIRSF000376">
    <property type="entry name" value="AcCoA_decarb_gamma"/>
    <property type="match status" value="1"/>
</dbReference>
<dbReference type="SUPFAM" id="SSF51717">
    <property type="entry name" value="Dihydropteroate synthetase-like"/>
    <property type="match status" value="1"/>
</dbReference>
<dbReference type="PROSITE" id="PS51656">
    <property type="entry name" value="4FE4S"/>
    <property type="match status" value="1"/>
</dbReference>
<organism>
    <name type="scientific">Archaeoglobus fulgidus (strain ATCC 49558 / DSM 4304 / JCM 9628 / NBRC 100126 / VC-16)</name>
    <dbReference type="NCBI Taxonomy" id="224325"/>
    <lineage>
        <taxon>Archaea</taxon>
        <taxon>Methanobacteriati</taxon>
        <taxon>Methanobacteriota</taxon>
        <taxon>Archaeoglobi</taxon>
        <taxon>Archaeoglobales</taxon>
        <taxon>Archaeoglobaceae</taxon>
        <taxon>Archaeoglobus</taxon>
    </lineage>
</organism>
<comment type="function">
    <text evidence="1">Part of a complex that catalyzes the reversible cleavage of acetyl-CoA, allowing autotrophic growth from CO(2).</text>
</comment>
<comment type="catalytic activity">
    <reaction evidence="1">
        <text>5,6,7,8-tetrahydrosarcinapterin + methyl-Co(III)-[corrinoid Fe-S protein] = 5-methyltetrahydrosarcinapterin + Co(I)-[corrinoid Fe-S protein] + H(+)</text>
        <dbReference type="Rhea" id="RHEA:45196"/>
        <dbReference type="Rhea" id="RHEA-COMP:11110"/>
        <dbReference type="Rhea" id="RHEA-COMP:11111"/>
        <dbReference type="ChEBI" id="CHEBI:15378"/>
        <dbReference type="ChEBI" id="CHEBI:59924"/>
        <dbReference type="ChEBI" id="CHEBI:64267"/>
        <dbReference type="ChEBI" id="CHEBI:85033"/>
        <dbReference type="ChEBI" id="CHEBI:85035"/>
        <dbReference type="EC" id="2.1.1.245"/>
    </reaction>
</comment>
<comment type="cofactor">
    <cofactor evidence="1">
        <name>corrinoid</name>
        <dbReference type="ChEBI" id="CHEBI:33913"/>
    </cofactor>
</comment>
<comment type="cofactor">
    <cofactor evidence="1">
        <name>[4Fe-4S] cluster</name>
        <dbReference type="ChEBI" id="CHEBI:49883"/>
    </cofactor>
    <text evidence="1">Binds 1 [4Fe-4S] cluster.</text>
</comment>
<comment type="subunit">
    <text evidence="1">Heterodimer of delta and gamma chains. The ACDS complex is made up of alpha, epsilon, beta, gamma and delta chains with a probable stoichiometry of (alpha(2)epsilon(2))(4)-beta(8)-(gamma(1)delta(1))(8).</text>
</comment>
<keyword id="KW-0004">4Fe-4S</keyword>
<keyword id="KW-0170">Cobalt</keyword>
<keyword id="KW-0903">Direct protein sequencing</keyword>
<keyword id="KW-0408">Iron</keyword>
<keyword id="KW-0411">Iron-sulfur</keyword>
<keyword id="KW-0479">Metal-binding</keyword>
<keyword id="KW-0489">Methyltransferase</keyword>
<keyword id="KW-1185">Reference proteome</keyword>
<keyword id="KW-0808">Transferase</keyword>
<gene>
    <name evidence="1" type="primary">cdhE</name>
    <name type="ordered locus">AF_0376</name>
</gene>
<name>ACDG_ARCFU</name>
<protein>
    <recommendedName>
        <fullName evidence="1">Acetyl-CoA decarbonylase/synthase complex subunit gamma</fullName>
        <shortName evidence="1">ACDS complex subunit gamma</shortName>
        <ecNumber evidence="1">2.1.1.245</ecNumber>
    </recommendedName>
    <alternativeName>
        <fullName evidence="1">5-methyltetrahydrosarcinapterin:corrinoid/iron-sulfur protein Co-methyltransferase</fullName>
    </alternativeName>
    <alternativeName>
        <fullName evidence="1">ACDS complex methyltransferase</fullName>
    </alternativeName>
    <alternativeName>
        <fullName evidence="1">Corrinoid/iron-sulfur component large subunit</fullName>
    </alternativeName>
</protein>
<proteinExistence type="evidence at protein level"/>
<accession>O29871</accession>